<gene>
    <name evidence="1" type="primary">psd</name>
    <name type="ordered locus">RPC_2095</name>
</gene>
<organism>
    <name type="scientific">Rhodopseudomonas palustris (strain BisB18)</name>
    <dbReference type="NCBI Taxonomy" id="316056"/>
    <lineage>
        <taxon>Bacteria</taxon>
        <taxon>Pseudomonadati</taxon>
        <taxon>Pseudomonadota</taxon>
        <taxon>Alphaproteobacteria</taxon>
        <taxon>Hyphomicrobiales</taxon>
        <taxon>Nitrobacteraceae</taxon>
        <taxon>Rhodopseudomonas</taxon>
    </lineage>
</organism>
<keyword id="KW-1003">Cell membrane</keyword>
<keyword id="KW-0210">Decarboxylase</keyword>
<keyword id="KW-0444">Lipid biosynthesis</keyword>
<keyword id="KW-0443">Lipid metabolism</keyword>
<keyword id="KW-0456">Lyase</keyword>
<keyword id="KW-0472">Membrane</keyword>
<keyword id="KW-0594">Phospholipid biosynthesis</keyword>
<keyword id="KW-1208">Phospholipid metabolism</keyword>
<keyword id="KW-0670">Pyruvate</keyword>
<keyword id="KW-0865">Zymogen</keyword>
<comment type="function">
    <text evidence="1">Catalyzes the formation of phosphatidylethanolamine (PtdEtn) from phosphatidylserine (PtdSer).</text>
</comment>
<comment type="catalytic activity">
    <reaction evidence="1">
        <text>a 1,2-diacyl-sn-glycero-3-phospho-L-serine + H(+) = a 1,2-diacyl-sn-glycero-3-phosphoethanolamine + CO2</text>
        <dbReference type="Rhea" id="RHEA:20828"/>
        <dbReference type="ChEBI" id="CHEBI:15378"/>
        <dbReference type="ChEBI" id="CHEBI:16526"/>
        <dbReference type="ChEBI" id="CHEBI:57262"/>
        <dbReference type="ChEBI" id="CHEBI:64612"/>
        <dbReference type="EC" id="4.1.1.65"/>
    </reaction>
</comment>
<comment type="cofactor">
    <cofactor evidence="1">
        <name>pyruvate</name>
        <dbReference type="ChEBI" id="CHEBI:15361"/>
    </cofactor>
    <text evidence="1">Binds 1 pyruvoyl group covalently per subunit.</text>
</comment>
<comment type="pathway">
    <text evidence="1">Phospholipid metabolism; phosphatidylethanolamine biosynthesis; phosphatidylethanolamine from CDP-diacylglycerol: step 2/2.</text>
</comment>
<comment type="subunit">
    <text evidence="1">Heterodimer of a large membrane-associated beta subunit and a small pyruvoyl-containing alpha subunit.</text>
</comment>
<comment type="subcellular location">
    <subcellularLocation>
        <location evidence="1">Cell membrane</location>
        <topology evidence="1">Peripheral membrane protein</topology>
    </subcellularLocation>
</comment>
<comment type="PTM">
    <text evidence="1">Is synthesized initially as an inactive proenzyme. Formation of the active enzyme involves a self-maturation process in which the active site pyruvoyl group is generated from an internal serine residue via an autocatalytic post-translational modification. Two non-identical subunits are generated from the proenzyme in this reaction, and the pyruvate is formed at the N-terminus of the alpha chain, which is derived from the carboxyl end of the proenzyme. The post-translation cleavage follows an unusual pathway, termed non-hydrolytic serinolysis, in which the side chain hydroxyl group of the serine supplies its oxygen atom to form the C-terminus of the beta chain, while the remainder of the serine residue undergoes an oxidative deamination to produce ammonia and the pyruvoyl prosthetic group on the alpha chain.</text>
</comment>
<comment type="similarity">
    <text evidence="1">Belongs to the phosphatidylserine decarboxylase family. PSD-A subfamily.</text>
</comment>
<proteinExistence type="inferred from homology"/>
<evidence type="ECO:0000255" key="1">
    <source>
        <dbReference type="HAMAP-Rule" id="MF_00664"/>
    </source>
</evidence>
<feature type="chain" id="PRO_0000262257" description="Phosphatidylserine decarboxylase beta chain" evidence="1">
    <location>
        <begin position="1"/>
        <end position="189"/>
    </location>
</feature>
<feature type="chain" id="PRO_0000262258" description="Phosphatidylserine decarboxylase alpha chain" evidence="1">
    <location>
        <begin position="190"/>
        <end position="232"/>
    </location>
</feature>
<feature type="active site" description="Schiff-base intermediate with substrate; via pyruvic acid" evidence="1">
    <location>
        <position position="190"/>
    </location>
</feature>
<feature type="site" description="Cleavage (non-hydrolytic); by autocatalysis" evidence="1">
    <location>
        <begin position="189"/>
        <end position="190"/>
    </location>
</feature>
<feature type="modified residue" description="Pyruvic acid (Ser); by autocatalysis" evidence="1">
    <location>
        <position position="190"/>
    </location>
</feature>
<protein>
    <recommendedName>
        <fullName evidence="1">Phosphatidylserine decarboxylase proenzyme</fullName>
        <ecNumber evidence="1">4.1.1.65</ecNumber>
    </recommendedName>
    <component>
        <recommendedName>
            <fullName evidence="1">Phosphatidylserine decarboxylase alpha chain</fullName>
        </recommendedName>
    </component>
    <component>
        <recommendedName>
            <fullName evidence="1">Phosphatidylserine decarboxylase beta chain</fullName>
        </recommendedName>
    </component>
</protein>
<accession>Q216N7</accession>
<sequence>MSIVNSIRAQIPPIHREGYPFIGGFALISLLLFWLWTPLGWIGVVLTIWCALFFRDPVRVTPVRDDLVVAPADGRVSMVVSMVPPAELGLGDKPLLRISIFMSVFNCHVNRAPVAGRVERIVYSPGKFINADLDKASEDNERNSMVISTPGGQIGVIQIAGLVARRIVSFVRVGQVLGAGERFGLIRFGSRLDVYLPDGAKALVSPGQTSIAGETVLADFRQGDGGRSYRAA</sequence>
<dbReference type="EC" id="4.1.1.65" evidence="1"/>
<dbReference type="EMBL" id="CP000301">
    <property type="protein sequence ID" value="ABD87649.1"/>
    <property type="molecule type" value="Genomic_DNA"/>
</dbReference>
<dbReference type="STRING" id="316056.RPC_2095"/>
<dbReference type="KEGG" id="rpc:RPC_2095"/>
<dbReference type="eggNOG" id="COG0688">
    <property type="taxonomic scope" value="Bacteria"/>
</dbReference>
<dbReference type="HOGENOM" id="CLU_072492_0_0_5"/>
<dbReference type="OrthoDB" id="9790893at2"/>
<dbReference type="UniPathway" id="UPA00558">
    <property type="reaction ID" value="UER00616"/>
</dbReference>
<dbReference type="GO" id="GO:0005886">
    <property type="term" value="C:plasma membrane"/>
    <property type="evidence" value="ECO:0007669"/>
    <property type="project" value="UniProtKB-SubCell"/>
</dbReference>
<dbReference type="GO" id="GO:0004609">
    <property type="term" value="F:phosphatidylserine decarboxylase activity"/>
    <property type="evidence" value="ECO:0007669"/>
    <property type="project" value="UniProtKB-UniRule"/>
</dbReference>
<dbReference type="GO" id="GO:0006646">
    <property type="term" value="P:phosphatidylethanolamine biosynthetic process"/>
    <property type="evidence" value="ECO:0007669"/>
    <property type="project" value="UniProtKB-UniRule"/>
</dbReference>
<dbReference type="HAMAP" id="MF_00664">
    <property type="entry name" value="PS_decarb_PSD_A"/>
    <property type="match status" value="1"/>
</dbReference>
<dbReference type="InterPro" id="IPR003817">
    <property type="entry name" value="PS_Dcarbxylase"/>
</dbReference>
<dbReference type="InterPro" id="IPR033175">
    <property type="entry name" value="PSD-A"/>
</dbReference>
<dbReference type="NCBIfam" id="NF003677">
    <property type="entry name" value="PRK05305.1-1"/>
    <property type="match status" value="1"/>
</dbReference>
<dbReference type="NCBIfam" id="NF003678">
    <property type="entry name" value="PRK05305.1-2"/>
    <property type="match status" value="1"/>
</dbReference>
<dbReference type="NCBIfam" id="NF003679">
    <property type="entry name" value="PRK05305.1-3"/>
    <property type="match status" value="1"/>
</dbReference>
<dbReference type="NCBIfam" id="NF003685">
    <property type="entry name" value="PRK05305.2-5"/>
    <property type="match status" value="1"/>
</dbReference>
<dbReference type="PANTHER" id="PTHR35809">
    <property type="entry name" value="ARCHAETIDYLSERINE DECARBOXYLASE PROENZYME-RELATED"/>
    <property type="match status" value="1"/>
</dbReference>
<dbReference type="PANTHER" id="PTHR35809:SF1">
    <property type="entry name" value="ARCHAETIDYLSERINE DECARBOXYLASE PROENZYME-RELATED"/>
    <property type="match status" value="1"/>
</dbReference>
<dbReference type="Pfam" id="PF02666">
    <property type="entry name" value="PS_Dcarbxylase"/>
    <property type="match status" value="1"/>
</dbReference>
<reference key="1">
    <citation type="submission" date="2006-03" db="EMBL/GenBank/DDBJ databases">
        <title>Complete sequence of Rhodopseudomonas palustris BisB18.</title>
        <authorList>
            <consortium name="US DOE Joint Genome Institute"/>
            <person name="Copeland A."/>
            <person name="Lucas S."/>
            <person name="Lapidus A."/>
            <person name="Barry K."/>
            <person name="Detter J.C."/>
            <person name="Glavina del Rio T."/>
            <person name="Hammon N."/>
            <person name="Israni S."/>
            <person name="Dalin E."/>
            <person name="Tice H."/>
            <person name="Pitluck S."/>
            <person name="Chain P."/>
            <person name="Malfatti S."/>
            <person name="Shin M."/>
            <person name="Vergez L."/>
            <person name="Schmutz J."/>
            <person name="Larimer F."/>
            <person name="Land M."/>
            <person name="Hauser L."/>
            <person name="Pelletier D.A."/>
            <person name="Kyrpides N."/>
            <person name="Anderson I."/>
            <person name="Oda Y."/>
            <person name="Harwood C.S."/>
            <person name="Richardson P."/>
        </authorList>
    </citation>
    <scope>NUCLEOTIDE SEQUENCE [LARGE SCALE GENOMIC DNA]</scope>
    <source>
        <strain>BisB18</strain>
    </source>
</reference>
<name>PSD_RHOPB</name>